<feature type="chain" id="PRO_1000200468" description="High frequency lysogenization protein HflD">
    <location>
        <begin position="1"/>
        <end position="213"/>
    </location>
</feature>
<feature type="coiled-coil region" evidence="1">
    <location>
        <begin position="79"/>
        <end position="126"/>
    </location>
</feature>
<dbReference type="EMBL" id="CU928145">
    <property type="protein sequence ID" value="CAU97104.1"/>
    <property type="molecule type" value="Genomic_DNA"/>
</dbReference>
<dbReference type="RefSeq" id="WP_001297479.1">
    <property type="nucleotide sequence ID" value="NC_011748.1"/>
</dbReference>
<dbReference type="SMR" id="B7LGR0"/>
<dbReference type="GeneID" id="93776278"/>
<dbReference type="KEGG" id="eck:EC55989_1245"/>
<dbReference type="HOGENOM" id="CLU_098920_0_0_6"/>
<dbReference type="Proteomes" id="UP000000746">
    <property type="component" value="Chromosome"/>
</dbReference>
<dbReference type="GO" id="GO:0005737">
    <property type="term" value="C:cytoplasm"/>
    <property type="evidence" value="ECO:0007669"/>
    <property type="project" value="UniProtKB-SubCell"/>
</dbReference>
<dbReference type="GO" id="GO:0005886">
    <property type="term" value="C:plasma membrane"/>
    <property type="evidence" value="ECO:0007669"/>
    <property type="project" value="UniProtKB-SubCell"/>
</dbReference>
<dbReference type="FunFam" id="1.10.3890.10:FF:000001">
    <property type="entry name" value="High frequency lysogenization protein HflD homolog"/>
    <property type="match status" value="1"/>
</dbReference>
<dbReference type="Gene3D" id="1.10.3890.10">
    <property type="entry name" value="HflD-like"/>
    <property type="match status" value="1"/>
</dbReference>
<dbReference type="HAMAP" id="MF_00695">
    <property type="entry name" value="HflD_protein"/>
    <property type="match status" value="1"/>
</dbReference>
<dbReference type="InterPro" id="IPR007451">
    <property type="entry name" value="HflD"/>
</dbReference>
<dbReference type="InterPro" id="IPR035932">
    <property type="entry name" value="HflD-like_sf"/>
</dbReference>
<dbReference type="NCBIfam" id="NF001245">
    <property type="entry name" value="PRK00218.1-1"/>
    <property type="match status" value="1"/>
</dbReference>
<dbReference type="NCBIfam" id="NF001246">
    <property type="entry name" value="PRK00218.1-2"/>
    <property type="match status" value="1"/>
</dbReference>
<dbReference type="NCBIfam" id="NF001248">
    <property type="entry name" value="PRK00218.1-4"/>
    <property type="match status" value="1"/>
</dbReference>
<dbReference type="NCBIfam" id="NF001249">
    <property type="entry name" value="PRK00218.1-5"/>
    <property type="match status" value="1"/>
</dbReference>
<dbReference type="PANTHER" id="PTHR38100">
    <property type="entry name" value="HIGH FREQUENCY LYSOGENIZATION PROTEIN HFLD"/>
    <property type="match status" value="1"/>
</dbReference>
<dbReference type="PANTHER" id="PTHR38100:SF1">
    <property type="entry name" value="HIGH FREQUENCY LYSOGENIZATION PROTEIN HFLD"/>
    <property type="match status" value="1"/>
</dbReference>
<dbReference type="Pfam" id="PF04356">
    <property type="entry name" value="DUF489"/>
    <property type="match status" value="1"/>
</dbReference>
<dbReference type="SUPFAM" id="SSF101322">
    <property type="entry name" value="YcfC-like"/>
    <property type="match status" value="1"/>
</dbReference>
<keyword id="KW-0997">Cell inner membrane</keyword>
<keyword id="KW-1003">Cell membrane</keyword>
<keyword id="KW-0175">Coiled coil</keyword>
<keyword id="KW-0963">Cytoplasm</keyword>
<keyword id="KW-0472">Membrane</keyword>
<keyword id="KW-1185">Reference proteome</keyword>
<name>HFLD_ECO55</name>
<evidence type="ECO:0000255" key="1">
    <source>
        <dbReference type="HAMAP-Rule" id="MF_00695"/>
    </source>
</evidence>
<accession>B7LGR0</accession>
<protein>
    <recommendedName>
        <fullName evidence="1">High frequency lysogenization protein HflD</fullName>
    </recommendedName>
</protein>
<sequence length="213" mass="22948">MAKNYYDITLALAGICQSARLVQQLAHQGHCDADALHVSLNSIIDMNPSSTLAVFGGSEANLRVGLETLLGVLNASSRQGLNAELTRYTLSLMVLERKLSSAKGALDTLGNRINGLQRQLEHFDLQSETLMSAMAAIYVDVISPLGPRIQVTGSPAVLQSPQVQAKVRATLLAGIRAAVLWHQVGGGRLQLMFSRNRLTTQAKQILAHLTPEL</sequence>
<reference key="1">
    <citation type="journal article" date="2009" name="PLoS Genet.">
        <title>Organised genome dynamics in the Escherichia coli species results in highly diverse adaptive paths.</title>
        <authorList>
            <person name="Touchon M."/>
            <person name="Hoede C."/>
            <person name="Tenaillon O."/>
            <person name="Barbe V."/>
            <person name="Baeriswyl S."/>
            <person name="Bidet P."/>
            <person name="Bingen E."/>
            <person name="Bonacorsi S."/>
            <person name="Bouchier C."/>
            <person name="Bouvet O."/>
            <person name="Calteau A."/>
            <person name="Chiapello H."/>
            <person name="Clermont O."/>
            <person name="Cruveiller S."/>
            <person name="Danchin A."/>
            <person name="Diard M."/>
            <person name="Dossat C."/>
            <person name="Karoui M.E."/>
            <person name="Frapy E."/>
            <person name="Garry L."/>
            <person name="Ghigo J.M."/>
            <person name="Gilles A.M."/>
            <person name="Johnson J."/>
            <person name="Le Bouguenec C."/>
            <person name="Lescat M."/>
            <person name="Mangenot S."/>
            <person name="Martinez-Jehanne V."/>
            <person name="Matic I."/>
            <person name="Nassif X."/>
            <person name="Oztas S."/>
            <person name="Petit M.A."/>
            <person name="Pichon C."/>
            <person name="Rouy Z."/>
            <person name="Ruf C.S."/>
            <person name="Schneider D."/>
            <person name="Tourret J."/>
            <person name="Vacherie B."/>
            <person name="Vallenet D."/>
            <person name="Medigue C."/>
            <person name="Rocha E.P.C."/>
            <person name="Denamur E."/>
        </authorList>
    </citation>
    <scope>NUCLEOTIDE SEQUENCE [LARGE SCALE GENOMIC DNA]</scope>
    <source>
        <strain>55989 / EAEC</strain>
    </source>
</reference>
<organism>
    <name type="scientific">Escherichia coli (strain 55989 / EAEC)</name>
    <dbReference type="NCBI Taxonomy" id="585055"/>
    <lineage>
        <taxon>Bacteria</taxon>
        <taxon>Pseudomonadati</taxon>
        <taxon>Pseudomonadota</taxon>
        <taxon>Gammaproteobacteria</taxon>
        <taxon>Enterobacterales</taxon>
        <taxon>Enterobacteriaceae</taxon>
        <taxon>Escherichia</taxon>
    </lineage>
</organism>
<proteinExistence type="inferred from homology"/>
<comment type="function">
    <text evidence="1">Negative regulator of phage lambda lysogenization. Contributes to the degradation of the phage regulatory protein CII. Acts probably by holding CII on the membrane surface, away from the target promoters, but close to the FtsH protease.</text>
</comment>
<comment type="subunit">
    <text evidence="1">Interacts with CII protein from phage lambda.</text>
</comment>
<comment type="subcellular location">
    <subcellularLocation>
        <location>Cytoplasm</location>
    </subcellularLocation>
    <subcellularLocation>
        <location evidence="1">Cell inner membrane</location>
        <topology evidence="1">Peripheral membrane protein</topology>
        <orientation evidence="1">Cytoplasmic side</orientation>
    </subcellularLocation>
</comment>
<comment type="similarity">
    <text evidence="1">Belongs to the HflD family.</text>
</comment>
<gene>
    <name evidence="1" type="primary">hflD</name>
    <name type="ordered locus">EC55989_1245</name>
</gene>